<keyword id="KW-1003">Cell membrane</keyword>
<keyword id="KW-0472">Membrane</keyword>
<keyword id="KW-0677">Repeat</keyword>
<keyword id="KW-0812">Transmembrane</keyword>
<keyword id="KW-1133">Transmembrane helix</keyword>
<keyword id="KW-0813">Transport</keyword>
<protein>
    <recommendedName>
        <fullName evidence="1">Putative transport protein ASA_2308</fullName>
    </recommendedName>
</protein>
<name>Y2308_AERS4</name>
<reference key="1">
    <citation type="journal article" date="2008" name="BMC Genomics">
        <title>The genome of Aeromonas salmonicida subsp. salmonicida A449: insights into the evolution of a fish pathogen.</title>
        <authorList>
            <person name="Reith M.E."/>
            <person name="Singh R.K."/>
            <person name="Curtis B."/>
            <person name="Boyd J.M."/>
            <person name="Bouevitch A."/>
            <person name="Kimball J."/>
            <person name="Munholland J."/>
            <person name="Murphy C."/>
            <person name="Sarty D."/>
            <person name="Williams J."/>
            <person name="Nash J.H."/>
            <person name="Johnson S.C."/>
            <person name="Brown L.L."/>
        </authorList>
    </citation>
    <scope>NUCLEOTIDE SEQUENCE [LARGE SCALE GENOMIC DNA]</scope>
    <source>
        <strain>A449</strain>
    </source>
</reference>
<comment type="subcellular location">
    <subcellularLocation>
        <location evidence="1">Cell membrane</location>
        <topology evidence="1">Multi-pass membrane protein</topology>
    </subcellularLocation>
</comment>
<comment type="similarity">
    <text evidence="1">Belongs to the AAE transporter (TC 2.A.81) family. YbjL subfamily.</text>
</comment>
<sequence>MTIDFVTLLHQSDSLLLFVVLAFGLLLGKVRLGNFQIGNTIGVLFTALLFGQMGFEFTATTENVGFMLFIFCVGIEAGPHFFSVFLRDGIHYITLTLVILLTALLLTVGLAKFFNLGPGMAAGILAGSLTSTPALVGAQDALRSGLLNLPHKTDMQSVLDNMGIGYALTYLVGLVGLMLVVRYLPSLARLDLSTEAQKIARERGLSDNESRKTYLPIIRAYRVGPELAAWIGGRTLRETGIYPHTGCYVERIRRNGILASPDGDAVIQEGDEIALVGYPESHEKLDVNYRNGKEVFDRNLLDLQIVTEEIVVKNDGVVGRHLVELNLTEKGCFLNRVVRSQIEMPFDRNIMLQKGDVLQISGEKQRVKLLANKIGFISIHSQTTDLVAFTTFFVLGLLIGSVSLVFGQLEFGLGNAVGLLLAGILMGYLRANHPTVGYVPPGALRLAKDLGLAVFMVSTGLKAGGGILDHLSQVGAVVLFSGMLVTTLPVLVGYLFGVWVLKMNPALLLGAITGARTCAPAMDVVNEAANSSIPALGYAGTYAVANVMLTLAGSFIIGFWF</sequence>
<accession>A4SN85</accession>
<gene>
    <name type="ordered locus">ASA_2308</name>
</gene>
<dbReference type="EMBL" id="CP000644">
    <property type="protein sequence ID" value="ABO90357.1"/>
    <property type="molecule type" value="Genomic_DNA"/>
</dbReference>
<dbReference type="RefSeq" id="WP_011898784.1">
    <property type="nucleotide sequence ID" value="NC_009348.1"/>
</dbReference>
<dbReference type="SMR" id="A4SN85"/>
<dbReference type="STRING" id="29491.GCA_000820065_01620"/>
<dbReference type="KEGG" id="asa:ASA_2308"/>
<dbReference type="eggNOG" id="COG0569">
    <property type="taxonomic scope" value="Bacteria"/>
</dbReference>
<dbReference type="eggNOG" id="COG2985">
    <property type="taxonomic scope" value="Bacteria"/>
</dbReference>
<dbReference type="HOGENOM" id="CLU_035023_2_2_6"/>
<dbReference type="Proteomes" id="UP000000225">
    <property type="component" value="Chromosome"/>
</dbReference>
<dbReference type="GO" id="GO:0005886">
    <property type="term" value="C:plasma membrane"/>
    <property type="evidence" value="ECO:0007669"/>
    <property type="project" value="UniProtKB-SubCell"/>
</dbReference>
<dbReference type="GO" id="GO:0008324">
    <property type="term" value="F:monoatomic cation transmembrane transporter activity"/>
    <property type="evidence" value="ECO:0007669"/>
    <property type="project" value="InterPro"/>
</dbReference>
<dbReference type="GO" id="GO:0006813">
    <property type="term" value="P:potassium ion transport"/>
    <property type="evidence" value="ECO:0007669"/>
    <property type="project" value="InterPro"/>
</dbReference>
<dbReference type="Gene3D" id="3.30.70.1450">
    <property type="entry name" value="Regulator of K+ conductance, C-terminal domain"/>
    <property type="match status" value="1"/>
</dbReference>
<dbReference type="HAMAP" id="MF_01015">
    <property type="entry name" value="YbjL"/>
    <property type="match status" value="1"/>
</dbReference>
<dbReference type="InterPro" id="IPR050144">
    <property type="entry name" value="AAE_transporter"/>
</dbReference>
<dbReference type="InterPro" id="IPR006037">
    <property type="entry name" value="RCK_C"/>
</dbReference>
<dbReference type="InterPro" id="IPR036721">
    <property type="entry name" value="RCK_C_sf"/>
</dbReference>
<dbReference type="InterPro" id="IPR023017">
    <property type="entry name" value="Transp_YbjL_put"/>
</dbReference>
<dbReference type="InterPro" id="IPR006512">
    <property type="entry name" value="YidE_YbjL"/>
</dbReference>
<dbReference type="NCBIfam" id="NF003440">
    <property type="entry name" value="PRK04972.1"/>
    <property type="match status" value="1"/>
</dbReference>
<dbReference type="NCBIfam" id="TIGR01625">
    <property type="entry name" value="YidE_YbjL_dupl"/>
    <property type="match status" value="2"/>
</dbReference>
<dbReference type="PANTHER" id="PTHR30445">
    <property type="entry name" value="K(+)_H(+) ANTIPORTER SUBUNIT KHTT"/>
    <property type="match status" value="1"/>
</dbReference>
<dbReference type="PANTHER" id="PTHR30445:SF10">
    <property type="entry name" value="TRANSPORT PROTEIN YBJL-RELATED"/>
    <property type="match status" value="1"/>
</dbReference>
<dbReference type="Pfam" id="PF06826">
    <property type="entry name" value="Asp-Al_Ex"/>
    <property type="match status" value="2"/>
</dbReference>
<dbReference type="Pfam" id="PF02080">
    <property type="entry name" value="TrkA_C"/>
    <property type="match status" value="2"/>
</dbReference>
<dbReference type="SUPFAM" id="SSF116726">
    <property type="entry name" value="TrkA C-terminal domain-like"/>
    <property type="match status" value="2"/>
</dbReference>
<dbReference type="PROSITE" id="PS51202">
    <property type="entry name" value="RCK_C"/>
    <property type="match status" value="2"/>
</dbReference>
<feature type="chain" id="PRO_0000329137" description="Putative transport protein ASA_2308">
    <location>
        <begin position="1"/>
        <end position="561"/>
    </location>
</feature>
<feature type="transmembrane region" description="Helical" evidence="1">
    <location>
        <begin position="8"/>
        <end position="28"/>
    </location>
</feature>
<feature type="transmembrane region" description="Helical" evidence="1">
    <location>
        <begin position="37"/>
        <end position="57"/>
    </location>
</feature>
<feature type="transmembrane region" description="Helical" evidence="1">
    <location>
        <begin position="66"/>
        <end position="86"/>
    </location>
</feature>
<feature type="transmembrane region" description="Helical" evidence="1">
    <location>
        <begin position="90"/>
        <end position="110"/>
    </location>
</feature>
<feature type="transmembrane region" description="Helical" evidence="1">
    <location>
        <begin position="161"/>
        <end position="181"/>
    </location>
</feature>
<feature type="transmembrane region" description="Helical" evidence="1">
    <location>
        <begin position="386"/>
        <end position="406"/>
    </location>
</feature>
<feature type="transmembrane region" description="Helical" evidence="1">
    <location>
        <begin position="409"/>
        <end position="429"/>
    </location>
</feature>
<feature type="transmembrane region" description="Helical" evidence="1">
    <location>
        <begin position="450"/>
        <end position="470"/>
    </location>
</feature>
<feature type="transmembrane region" description="Helical" evidence="1">
    <location>
        <begin position="476"/>
        <end position="496"/>
    </location>
</feature>
<feature type="transmembrane region" description="Helical" evidence="1">
    <location>
        <begin position="541"/>
        <end position="561"/>
    </location>
</feature>
<feature type="domain" description="RCK C-terminal 1" evidence="1">
    <location>
        <begin position="206"/>
        <end position="291"/>
    </location>
</feature>
<feature type="domain" description="RCK C-terminal 2" evidence="1">
    <location>
        <begin position="293"/>
        <end position="376"/>
    </location>
</feature>
<proteinExistence type="inferred from homology"/>
<evidence type="ECO:0000255" key="1">
    <source>
        <dbReference type="HAMAP-Rule" id="MF_01015"/>
    </source>
</evidence>
<organism>
    <name type="scientific">Aeromonas salmonicida (strain A449)</name>
    <dbReference type="NCBI Taxonomy" id="382245"/>
    <lineage>
        <taxon>Bacteria</taxon>
        <taxon>Pseudomonadati</taxon>
        <taxon>Pseudomonadota</taxon>
        <taxon>Gammaproteobacteria</taxon>
        <taxon>Aeromonadales</taxon>
        <taxon>Aeromonadaceae</taxon>
        <taxon>Aeromonas</taxon>
    </lineage>
</organism>